<comment type="function">
    <text evidence="1">Component of the large ribosomal subunit. The ribosome is a large ribonucleoprotein complex responsible for the synthesis of proteins in the cell.</text>
</comment>
<comment type="subunit">
    <text evidence="1">Component of the large ribosomal subunit.</text>
</comment>
<comment type="subcellular location">
    <subcellularLocation>
        <location evidence="1">Cytoplasm</location>
    </subcellularLocation>
</comment>
<comment type="similarity">
    <text evidence="3">Belongs to the eukaryotic ribosomal protein eL32 family.</text>
</comment>
<evidence type="ECO:0000250" key="1">
    <source>
        <dbReference type="UniProtKB" id="P62910"/>
    </source>
</evidence>
<evidence type="ECO:0000250" key="2">
    <source>
        <dbReference type="UniProtKB" id="P62911"/>
    </source>
</evidence>
<evidence type="ECO:0000305" key="3"/>
<accession>Q76KA3</accession>
<dbReference type="EMBL" id="AB093672">
    <property type="protein sequence ID" value="BAC21646.1"/>
    <property type="molecule type" value="mRNA"/>
</dbReference>
<dbReference type="RefSeq" id="NP_001270032.1">
    <property type="nucleotide sequence ID" value="NM_001283103.1"/>
</dbReference>
<dbReference type="RefSeq" id="XP_045241650.1">
    <property type="nucleotide sequence ID" value="XM_045385715.2"/>
</dbReference>
<dbReference type="RefSeq" id="XP_045241651.1">
    <property type="nucleotide sequence ID" value="XM_045385716.2"/>
</dbReference>
<dbReference type="SMR" id="Q76KA3"/>
<dbReference type="STRING" id="9541.ENSMFAP00000010922"/>
<dbReference type="Ensembl" id="ENSMFAT00000044917.2">
    <property type="protein sequence ID" value="ENSMFAP00000010922.1"/>
    <property type="gene ID" value="ENSMFAG00000011451.2"/>
</dbReference>
<dbReference type="Ensembl" id="ENSMFAT00000101782.1">
    <property type="protein sequence ID" value="ENSMFAP00000056659.1"/>
    <property type="gene ID" value="ENSMFAG00000045190.2"/>
</dbReference>
<dbReference type="GeneID" id="102128389"/>
<dbReference type="KEGG" id="mcf:102128774"/>
<dbReference type="VEuPathDB" id="HostDB:ENSMFAG00000011451"/>
<dbReference type="VEuPathDB" id="HostDB:ENSMFAG00000045190"/>
<dbReference type="eggNOG" id="KOG0878">
    <property type="taxonomic scope" value="Eukaryota"/>
</dbReference>
<dbReference type="GeneTree" id="ENSGT00940000153973"/>
<dbReference type="OMA" id="GPHNTAK"/>
<dbReference type="OrthoDB" id="8457at314294"/>
<dbReference type="Proteomes" id="UP000233100">
    <property type="component" value="Chromosome 2"/>
</dbReference>
<dbReference type="Proteomes" id="UP000233100">
    <property type="component" value="Chromosome 7"/>
</dbReference>
<dbReference type="Bgee" id="ENSMFAG00000011451">
    <property type="expression patterns" value="Expressed in spleen and 12 other cell types or tissues"/>
</dbReference>
<dbReference type="GO" id="GO:0022625">
    <property type="term" value="C:cytosolic large ribosomal subunit"/>
    <property type="evidence" value="ECO:0007669"/>
    <property type="project" value="TreeGrafter"/>
</dbReference>
<dbReference type="GO" id="GO:0003735">
    <property type="term" value="F:structural constituent of ribosome"/>
    <property type="evidence" value="ECO:0007669"/>
    <property type="project" value="InterPro"/>
</dbReference>
<dbReference type="GO" id="GO:0006412">
    <property type="term" value="P:translation"/>
    <property type="evidence" value="ECO:0007669"/>
    <property type="project" value="InterPro"/>
</dbReference>
<dbReference type="CDD" id="cd00513">
    <property type="entry name" value="Ribosomal_L32_L32e"/>
    <property type="match status" value="1"/>
</dbReference>
<dbReference type="InterPro" id="IPR001515">
    <property type="entry name" value="Ribosomal_eL32"/>
</dbReference>
<dbReference type="InterPro" id="IPR018263">
    <property type="entry name" value="Ribosomal_eL32_CS"/>
</dbReference>
<dbReference type="InterPro" id="IPR036351">
    <property type="entry name" value="Ribosomal_eL32_sf"/>
</dbReference>
<dbReference type="PANTHER" id="PTHR23413">
    <property type="entry name" value="60S RIBOSOMAL PROTEIN L32 AND DNA-DIRECTED RNA POLYMERASE II, SUBUNIT N"/>
    <property type="match status" value="1"/>
</dbReference>
<dbReference type="PANTHER" id="PTHR23413:SF6">
    <property type="entry name" value="LARGE RIBOSOMAL SUBUNIT PROTEIN EL32"/>
    <property type="match status" value="1"/>
</dbReference>
<dbReference type="Pfam" id="PF01655">
    <property type="entry name" value="Ribosomal_L32e"/>
    <property type="match status" value="1"/>
</dbReference>
<dbReference type="SMART" id="SM01393">
    <property type="entry name" value="Ribosomal_L32e"/>
    <property type="match status" value="1"/>
</dbReference>
<dbReference type="SUPFAM" id="SSF52042">
    <property type="entry name" value="Ribosomal protein L32e"/>
    <property type="match status" value="1"/>
</dbReference>
<dbReference type="PROSITE" id="PS00580">
    <property type="entry name" value="RIBOSOMAL_L32E"/>
    <property type="match status" value="1"/>
</dbReference>
<keyword id="KW-0963">Cytoplasm</keyword>
<keyword id="KW-1017">Isopeptide bond</keyword>
<keyword id="KW-0597">Phosphoprotein</keyword>
<keyword id="KW-1185">Reference proteome</keyword>
<keyword id="KW-0687">Ribonucleoprotein</keyword>
<keyword id="KW-0689">Ribosomal protein</keyword>
<keyword id="KW-0832">Ubl conjugation</keyword>
<sequence>MAALRPLVKPKIVKKRTKKFIRHQSDRYVKIKRNWRKPRGIDNRVRRRFKGQILMPNIGYGSNKKTKHMLPSGFRKFLVHNVKELEVLLMCNKSYCAEIAHNVSSKNRKAIVERAAQLAIRVTNPNARLRSEENE</sequence>
<protein>
    <recommendedName>
        <fullName evidence="3">Large ribosomal subunit protein eL32</fullName>
    </recommendedName>
    <alternativeName>
        <fullName>60S ribosomal protein L32</fullName>
    </alternativeName>
</protein>
<name>RL32_MACFA</name>
<feature type="chain" id="PRO_0000131114" description="Large ribosomal subunit protein eL32">
    <location>
        <begin position="1"/>
        <end position="135"/>
    </location>
</feature>
<feature type="modified residue" description="N6-succinyllysine" evidence="2">
    <location>
        <position position="50"/>
    </location>
</feature>
<feature type="modified residue" description="Phosphoserine" evidence="1">
    <location>
        <position position="62"/>
    </location>
</feature>
<feature type="cross-link" description="Glycyl lysine isopeptide (Lys-Gly) (interchain with G-Cter in SUMO2)" evidence="1">
    <location>
        <position position="9"/>
    </location>
</feature>
<proteinExistence type="evidence at transcript level"/>
<gene>
    <name type="primary">RPL32</name>
    <name type="ORF">QnpA-18306</name>
</gene>
<organism>
    <name type="scientific">Macaca fascicularis</name>
    <name type="common">Crab-eating macaque</name>
    <name type="synonym">Cynomolgus monkey</name>
    <dbReference type="NCBI Taxonomy" id="9541"/>
    <lineage>
        <taxon>Eukaryota</taxon>
        <taxon>Metazoa</taxon>
        <taxon>Chordata</taxon>
        <taxon>Craniata</taxon>
        <taxon>Vertebrata</taxon>
        <taxon>Euteleostomi</taxon>
        <taxon>Mammalia</taxon>
        <taxon>Eutheria</taxon>
        <taxon>Euarchontoglires</taxon>
        <taxon>Primates</taxon>
        <taxon>Haplorrhini</taxon>
        <taxon>Catarrhini</taxon>
        <taxon>Cercopithecidae</taxon>
        <taxon>Cercopithecinae</taxon>
        <taxon>Macaca</taxon>
    </lineage>
</organism>
<reference key="1">
    <citation type="journal article" date="2001" name="Gene">
        <title>Assignment of 118 novel cDNAs of cynomolgus monkey brain to human chromosomes.</title>
        <authorList>
            <person name="Osada N."/>
            <person name="Hida M."/>
            <person name="Kususda J."/>
            <person name="Tanuma R."/>
            <person name="Iseki K."/>
            <person name="Hirata M."/>
            <person name="Suto Y."/>
            <person name="Hirai M."/>
            <person name="Terao K."/>
            <person name="Suzuki Y."/>
            <person name="Sugano S."/>
            <person name="Hashimoto K."/>
        </authorList>
    </citation>
    <scope>NUCLEOTIDE SEQUENCE [LARGE SCALE MRNA]</scope>
    <source>
        <tissue>Parietal cortex</tissue>
    </source>
</reference>
<reference key="2">
    <citation type="journal article" date="2001" name="Gene">
        <authorList>
            <person name="Osada N."/>
            <person name="Hida M."/>
            <person name="Kusuda J."/>
            <person name="Tanuma R."/>
            <person name="Iseki K."/>
            <person name="Hirata M."/>
            <person name="Suto Y."/>
            <person name="Hirai M."/>
            <person name="Terao K."/>
            <person name="Suzuki Y."/>
            <person name="Sugano S."/>
            <person name="Hashimoto K."/>
            <person name="Kususda J."/>
        </authorList>
    </citation>
    <scope>ERRATUM OF PUBMED:11574149</scope>
</reference>